<evidence type="ECO:0000250" key="1">
    <source>
        <dbReference type="UniProtKB" id="P02649"/>
    </source>
</evidence>
<evidence type="ECO:0000250" key="2">
    <source>
        <dbReference type="UniProtKB" id="P08226"/>
    </source>
</evidence>
<evidence type="ECO:0000255" key="3"/>
<evidence type="ECO:0000305" key="4"/>
<keyword id="KW-0162">Chylomicron</keyword>
<keyword id="KW-0967">Endosome</keyword>
<keyword id="KW-0272">Extracellular matrix</keyword>
<keyword id="KW-0325">Glycoprotein</keyword>
<keyword id="KW-0345">HDL</keyword>
<keyword id="KW-0358">Heparin-binding</keyword>
<keyword id="KW-0445">Lipid transport</keyword>
<keyword id="KW-0446">Lipid-binding</keyword>
<keyword id="KW-0558">Oxidation</keyword>
<keyword id="KW-0597">Phosphoprotein</keyword>
<keyword id="KW-1185">Reference proteome</keyword>
<keyword id="KW-0677">Repeat</keyword>
<keyword id="KW-0964">Secreted</keyword>
<keyword id="KW-0732">Signal</keyword>
<keyword id="KW-0813">Transport</keyword>
<keyword id="KW-0850">VLDL</keyword>
<protein>
    <recommendedName>
        <fullName>Apolipoprotein E</fullName>
        <shortName>Apo-E</shortName>
    </recommendedName>
</protein>
<sequence length="317" mass="36102">MKVLWAALLVTFLAGCQAKVEQVVETEPEPELHQQAEWQSGQRWELALGHFWDYLRWVQTLSEQVQEELLSSQVTQELTALMDETMKELKAYKSELEEQLTPVAEETRARLSKELQAAQARLGADMEDVRGRLVQYRGEVQAMLGQSTEELRARLASHLRKLRKRLLRDADDLQKRLAVYQAGAREGAERGVSAIRERLGPLVEQGRVRAATVGSLAGQPLQERAQAWGERLRARMEEMGSRTRDRLDEVKEQVAEVRAKLEEQAQQIRLQAEAFQARLKSWFEPLVEDMQRQWAGLVEKVQAAMGTSAAPVPSDNH</sequence>
<accession>Q9GJU3</accession>
<feature type="signal peptide" evidence="3">
    <location>
        <begin position="1"/>
        <end position="18"/>
    </location>
</feature>
<feature type="chain" id="PRO_0000001991" description="Apolipoprotein E">
    <location>
        <begin position="19"/>
        <end position="317"/>
    </location>
</feature>
<feature type="repeat" description="1">
    <location>
        <begin position="80"/>
        <end position="101"/>
    </location>
</feature>
<feature type="repeat" description="2">
    <location>
        <begin position="102"/>
        <end position="123"/>
    </location>
</feature>
<feature type="repeat" description="3">
    <location>
        <begin position="124"/>
        <end position="145"/>
    </location>
</feature>
<feature type="repeat" description="4">
    <location>
        <begin position="146"/>
        <end position="167"/>
    </location>
</feature>
<feature type="repeat" description="5">
    <location>
        <begin position="168"/>
        <end position="189"/>
    </location>
</feature>
<feature type="repeat" description="6">
    <location>
        <begin position="190"/>
        <end position="211"/>
    </location>
</feature>
<feature type="repeat" description="7">
    <location>
        <begin position="212"/>
        <end position="233"/>
    </location>
</feature>
<feature type="repeat" description="8">
    <location>
        <begin position="234"/>
        <end position="255"/>
    </location>
</feature>
<feature type="region of interest" description="8 X 22 AA approximate tandem repeats">
    <location>
        <begin position="80"/>
        <end position="255"/>
    </location>
</feature>
<feature type="region of interest" description="LDL and other lipoprotein receptors binding" evidence="1">
    <location>
        <begin position="158"/>
        <end position="168"/>
    </location>
</feature>
<feature type="region of interest" description="Lipid-binding and lipoprotein association" evidence="1">
    <location>
        <begin position="210"/>
        <end position="290"/>
    </location>
</feature>
<feature type="region of interest" description="Homooligomerization" evidence="1">
    <location>
        <begin position="266"/>
        <end position="317"/>
    </location>
</feature>
<feature type="region of interest" description="Specificity for association with VLDL" evidence="1">
    <location>
        <begin position="278"/>
        <end position="290"/>
    </location>
</feature>
<feature type="binding site" evidence="1">
    <location>
        <begin position="162"/>
        <end position="165"/>
    </location>
    <ligand>
        <name>heparin</name>
        <dbReference type="ChEBI" id="CHEBI:28304"/>
    </ligand>
</feature>
<feature type="binding site" evidence="1">
    <location>
        <begin position="229"/>
        <end position="236"/>
    </location>
    <ligand>
        <name>heparin</name>
        <dbReference type="ChEBI" id="CHEBI:28304"/>
    </ligand>
</feature>
<feature type="modified residue" description="Methionine sulfoxide" evidence="2">
    <location>
        <position position="143"/>
    </location>
</feature>
<feature type="modified residue" description="Phosphoserine" evidence="1">
    <location>
        <position position="147"/>
    </location>
</feature>
<proteinExistence type="inferred from homology"/>
<name>APOE_PANTR</name>
<organism>
    <name type="scientific">Pan troglodytes</name>
    <name type="common">Chimpanzee</name>
    <dbReference type="NCBI Taxonomy" id="9598"/>
    <lineage>
        <taxon>Eukaryota</taxon>
        <taxon>Metazoa</taxon>
        <taxon>Chordata</taxon>
        <taxon>Craniata</taxon>
        <taxon>Vertebrata</taxon>
        <taxon>Euteleostomi</taxon>
        <taxon>Mammalia</taxon>
        <taxon>Eutheria</taxon>
        <taxon>Euarchontoglires</taxon>
        <taxon>Primates</taxon>
        <taxon>Haplorrhini</taxon>
        <taxon>Catarrhini</taxon>
        <taxon>Hominidae</taxon>
        <taxon>Pan</taxon>
    </lineage>
</organism>
<gene>
    <name type="primary">APOE</name>
</gene>
<dbReference type="EMBL" id="AF200499">
    <property type="protein sequence ID" value="AAG28578.1"/>
    <property type="molecule type" value="Genomic_DNA"/>
</dbReference>
<dbReference type="EMBL" id="AF200497">
    <property type="protein sequence ID" value="AAG28578.1"/>
    <property type="status" value="JOINED"/>
    <property type="molecule type" value="Genomic_DNA"/>
</dbReference>
<dbReference type="EMBL" id="AF200498">
    <property type="protein sequence ID" value="AAG28578.1"/>
    <property type="status" value="JOINED"/>
    <property type="molecule type" value="Genomic_DNA"/>
</dbReference>
<dbReference type="EMBL" id="AF261280">
    <property type="protein sequence ID" value="AAG27090.1"/>
    <property type="molecule type" value="Genomic_DNA"/>
</dbReference>
<dbReference type="RefSeq" id="NP_001009007.1">
    <property type="nucleotide sequence ID" value="NM_001009007.1"/>
</dbReference>
<dbReference type="SMR" id="Q9GJU3"/>
<dbReference type="FunCoup" id="Q9GJU3">
    <property type="interactions" value="42"/>
</dbReference>
<dbReference type="STRING" id="9598.ENSPTRP00000054411"/>
<dbReference type="PaxDb" id="9598-ENSPTRP00000054411"/>
<dbReference type="Ensembl" id="ENSPTRT00000061867.3">
    <property type="protein sequence ID" value="ENSPTRP00000054411.3"/>
    <property type="gene ID" value="ENSPTRG00000011127.7"/>
</dbReference>
<dbReference type="GeneID" id="449586"/>
<dbReference type="KEGG" id="ptr:449586"/>
<dbReference type="CTD" id="348"/>
<dbReference type="VGNC" id="VGNC:57935">
    <property type="gene designation" value="APOE"/>
</dbReference>
<dbReference type="eggNOG" id="ENOG502QVD6">
    <property type="taxonomic scope" value="Eukaryota"/>
</dbReference>
<dbReference type="GeneTree" id="ENSGT00950000182929"/>
<dbReference type="InParanoid" id="Q9GJU3"/>
<dbReference type="OMA" id="GHMTDAR"/>
<dbReference type="OrthoDB" id="14533at9604"/>
<dbReference type="Proteomes" id="UP000002277">
    <property type="component" value="Chromosome 19"/>
</dbReference>
<dbReference type="Bgee" id="ENSPTRG00000011127">
    <property type="expression patterns" value="Expressed in liver and 20 other cell types or tissues"/>
</dbReference>
<dbReference type="GO" id="GO:0042627">
    <property type="term" value="C:chylomicron"/>
    <property type="evidence" value="ECO:0000318"/>
    <property type="project" value="GO_Central"/>
</dbReference>
<dbReference type="GO" id="GO:0034360">
    <property type="term" value="C:chylomicron remnant"/>
    <property type="evidence" value="ECO:0007669"/>
    <property type="project" value="Ensembl"/>
</dbReference>
<dbReference type="GO" id="GO:0005783">
    <property type="term" value="C:endoplasmic reticulum"/>
    <property type="evidence" value="ECO:0007669"/>
    <property type="project" value="Ensembl"/>
</dbReference>
<dbReference type="GO" id="GO:0070062">
    <property type="term" value="C:extracellular exosome"/>
    <property type="evidence" value="ECO:0000250"/>
    <property type="project" value="UniProtKB"/>
</dbReference>
<dbReference type="GO" id="GO:0031012">
    <property type="term" value="C:extracellular matrix"/>
    <property type="evidence" value="ECO:0000250"/>
    <property type="project" value="UniProtKB"/>
</dbReference>
<dbReference type="GO" id="GO:0005615">
    <property type="term" value="C:extracellular space"/>
    <property type="evidence" value="ECO:0000250"/>
    <property type="project" value="UniProtKB"/>
</dbReference>
<dbReference type="GO" id="GO:1903561">
    <property type="term" value="C:extracellular vesicle"/>
    <property type="evidence" value="ECO:0000318"/>
    <property type="project" value="GO_Central"/>
</dbReference>
<dbReference type="GO" id="GO:0098978">
    <property type="term" value="C:glutamatergic synapse"/>
    <property type="evidence" value="ECO:0007669"/>
    <property type="project" value="Ensembl"/>
</dbReference>
<dbReference type="GO" id="GO:0005794">
    <property type="term" value="C:Golgi apparatus"/>
    <property type="evidence" value="ECO:0007669"/>
    <property type="project" value="Ensembl"/>
</dbReference>
<dbReference type="GO" id="GO:0034364">
    <property type="term" value="C:high-density lipoprotein particle"/>
    <property type="evidence" value="ECO:0000250"/>
    <property type="project" value="UniProtKB"/>
</dbReference>
<dbReference type="GO" id="GO:0034363">
    <property type="term" value="C:intermediate-density lipoprotein particle"/>
    <property type="evidence" value="ECO:0000250"/>
    <property type="project" value="UniProtKB"/>
</dbReference>
<dbReference type="GO" id="GO:0034362">
    <property type="term" value="C:low-density lipoprotein particle"/>
    <property type="evidence" value="ECO:0000250"/>
    <property type="project" value="UniProtKB"/>
</dbReference>
<dbReference type="GO" id="GO:0042470">
    <property type="term" value="C:melanosome"/>
    <property type="evidence" value="ECO:0007669"/>
    <property type="project" value="Ensembl"/>
</dbReference>
<dbReference type="GO" id="GO:0097487">
    <property type="term" value="C:multivesicular body, internal vesicle"/>
    <property type="evidence" value="ECO:0000250"/>
    <property type="project" value="UniProtKB"/>
</dbReference>
<dbReference type="GO" id="GO:0005886">
    <property type="term" value="C:plasma membrane"/>
    <property type="evidence" value="ECO:0007669"/>
    <property type="project" value="GOC"/>
</dbReference>
<dbReference type="GO" id="GO:0043083">
    <property type="term" value="C:synaptic cleft"/>
    <property type="evidence" value="ECO:0007669"/>
    <property type="project" value="Ensembl"/>
</dbReference>
<dbReference type="GO" id="GO:0034361">
    <property type="term" value="C:very-low-density lipoprotein particle"/>
    <property type="evidence" value="ECO:0000250"/>
    <property type="project" value="UniProtKB"/>
</dbReference>
<dbReference type="GO" id="GO:0001540">
    <property type="term" value="F:amyloid-beta binding"/>
    <property type="evidence" value="ECO:0000250"/>
    <property type="project" value="UniProtKB"/>
</dbReference>
<dbReference type="GO" id="GO:0016209">
    <property type="term" value="F:antioxidant activity"/>
    <property type="evidence" value="ECO:0007669"/>
    <property type="project" value="Ensembl"/>
</dbReference>
<dbReference type="GO" id="GO:0120020">
    <property type="term" value="F:cholesterol transfer activity"/>
    <property type="evidence" value="ECO:0000318"/>
    <property type="project" value="GO_Central"/>
</dbReference>
<dbReference type="GO" id="GO:0019899">
    <property type="term" value="F:enzyme binding"/>
    <property type="evidence" value="ECO:0007669"/>
    <property type="project" value="Ensembl"/>
</dbReference>
<dbReference type="GO" id="GO:0043395">
    <property type="term" value="F:heparan sulfate proteoglycan binding"/>
    <property type="evidence" value="ECO:0000250"/>
    <property type="project" value="UniProtKB"/>
</dbReference>
<dbReference type="GO" id="GO:0008201">
    <property type="term" value="F:heparin binding"/>
    <property type="evidence" value="ECO:0000250"/>
    <property type="project" value="UniProtKB"/>
</dbReference>
<dbReference type="GO" id="GO:0042802">
    <property type="term" value="F:identical protein binding"/>
    <property type="evidence" value="ECO:0000250"/>
    <property type="project" value="UniProtKB"/>
</dbReference>
<dbReference type="GO" id="GO:0071813">
    <property type="term" value="F:lipoprotein particle binding"/>
    <property type="evidence" value="ECO:0007669"/>
    <property type="project" value="Ensembl"/>
</dbReference>
<dbReference type="GO" id="GO:0050750">
    <property type="term" value="F:low-density lipoprotein particle receptor binding"/>
    <property type="evidence" value="ECO:0000250"/>
    <property type="project" value="UniProtKB"/>
</dbReference>
<dbReference type="GO" id="GO:0046911">
    <property type="term" value="F:metal chelating activity"/>
    <property type="evidence" value="ECO:0007669"/>
    <property type="project" value="Ensembl"/>
</dbReference>
<dbReference type="GO" id="GO:0060228">
    <property type="term" value="F:phosphatidylcholine-sterol O-acyltransferase activator activity"/>
    <property type="evidence" value="ECO:0000318"/>
    <property type="project" value="GO_Central"/>
</dbReference>
<dbReference type="GO" id="GO:0005543">
    <property type="term" value="F:phospholipid binding"/>
    <property type="evidence" value="ECO:0000318"/>
    <property type="project" value="GO_Central"/>
</dbReference>
<dbReference type="GO" id="GO:0042803">
    <property type="term" value="F:protein homodimerization activity"/>
    <property type="evidence" value="ECO:0007669"/>
    <property type="project" value="Ensembl"/>
</dbReference>
<dbReference type="GO" id="GO:0048018">
    <property type="term" value="F:receptor ligand activity"/>
    <property type="evidence" value="ECO:0007669"/>
    <property type="project" value="Ensembl"/>
</dbReference>
<dbReference type="GO" id="GO:0048156">
    <property type="term" value="F:tau protein binding"/>
    <property type="evidence" value="ECO:0007669"/>
    <property type="project" value="Ensembl"/>
</dbReference>
<dbReference type="GO" id="GO:0070326">
    <property type="term" value="F:very-low-density lipoprotein particle receptor binding"/>
    <property type="evidence" value="ECO:0007669"/>
    <property type="project" value="Ensembl"/>
</dbReference>
<dbReference type="GO" id="GO:0055090">
    <property type="term" value="P:acylglycerol homeostasis"/>
    <property type="evidence" value="ECO:0000318"/>
    <property type="project" value="GO_Central"/>
</dbReference>
<dbReference type="GO" id="GO:0097113">
    <property type="term" value="P:AMPA glutamate receptor clustering"/>
    <property type="evidence" value="ECO:0007669"/>
    <property type="project" value="Ensembl"/>
</dbReference>
<dbReference type="GO" id="GO:0042982">
    <property type="term" value="P:amyloid precursor protein metabolic process"/>
    <property type="evidence" value="ECO:0007669"/>
    <property type="project" value="Ensembl"/>
</dbReference>
<dbReference type="GO" id="GO:0048844">
    <property type="term" value="P:artery morphogenesis"/>
    <property type="evidence" value="ECO:0007669"/>
    <property type="project" value="Ensembl"/>
</dbReference>
<dbReference type="GO" id="GO:0071402">
    <property type="term" value="P:cellular response to lipoprotein particle stimulus"/>
    <property type="evidence" value="ECO:0007669"/>
    <property type="project" value="Ensembl"/>
</dbReference>
<dbReference type="GO" id="GO:0006707">
    <property type="term" value="P:cholesterol catabolic process"/>
    <property type="evidence" value="ECO:0007669"/>
    <property type="project" value="Ensembl"/>
</dbReference>
<dbReference type="GO" id="GO:0033344">
    <property type="term" value="P:cholesterol efflux"/>
    <property type="evidence" value="ECO:0000250"/>
    <property type="project" value="UniProtKB"/>
</dbReference>
<dbReference type="GO" id="GO:0042632">
    <property type="term" value="P:cholesterol homeostasis"/>
    <property type="evidence" value="ECO:0007669"/>
    <property type="project" value="Ensembl"/>
</dbReference>
<dbReference type="GO" id="GO:0008203">
    <property type="term" value="P:cholesterol metabolic process"/>
    <property type="evidence" value="ECO:0000318"/>
    <property type="project" value="GO_Central"/>
</dbReference>
<dbReference type="GO" id="GO:0034382">
    <property type="term" value="P:chylomicron remnant clearance"/>
    <property type="evidence" value="ECO:0000250"/>
    <property type="project" value="UniProtKB"/>
</dbReference>
<dbReference type="GO" id="GO:0055089">
    <property type="term" value="P:fatty acid homeostasis"/>
    <property type="evidence" value="ECO:0007669"/>
    <property type="project" value="Ensembl"/>
</dbReference>
<dbReference type="GO" id="GO:0007186">
    <property type="term" value="P:G protein-coupled receptor signaling pathway"/>
    <property type="evidence" value="ECO:0007669"/>
    <property type="project" value="Ensembl"/>
</dbReference>
<dbReference type="GO" id="GO:0010467">
    <property type="term" value="P:gene expression"/>
    <property type="evidence" value="ECO:0007669"/>
    <property type="project" value="Ensembl"/>
</dbReference>
<dbReference type="GO" id="GO:0034380">
    <property type="term" value="P:high-density lipoprotein particle assembly"/>
    <property type="evidence" value="ECO:0000250"/>
    <property type="project" value="UniProtKB"/>
</dbReference>
<dbReference type="GO" id="GO:0034384">
    <property type="term" value="P:high-density lipoprotein particle clearance"/>
    <property type="evidence" value="ECO:0007669"/>
    <property type="project" value="Ensembl"/>
</dbReference>
<dbReference type="GO" id="GO:0034375">
    <property type="term" value="P:high-density lipoprotein particle remodeling"/>
    <property type="evidence" value="ECO:0007669"/>
    <property type="project" value="Ensembl"/>
</dbReference>
<dbReference type="GO" id="GO:0071831">
    <property type="term" value="P:intermediate-density lipoprotein particle clearance"/>
    <property type="evidence" value="ECO:0000250"/>
    <property type="project" value="UniProtKB"/>
</dbReference>
<dbReference type="GO" id="GO:0006874">
    <property type="term" value="P:intracellular calcium ion homeostasis"/>
    <property type="evidence" value="ECO:0007669"/>
    <property type="project" value="Ensembl"/>
</dbReference>
<dbReference type="GO" id="GO:0010877">
    <property type="term" value="P:lipid transport involved in lipid storage"/>
    <property type="evidence" value="ECO:0007669"/>
    <property type="project" value="Ensembl"/>
</dbReference>
<dbReference type="GO" id="GO:0042158">
    <property type="term" value="P:lipoprotein biosynthetic process"/>
    <property type="evidence" value="ECO:0000250"/>
    <property type="project" value="UniProtKB"/>
</dbReference>
<dbReference type="GO" id="GO:0042159">
    <property type="term" value="P:lipoprotein catabolic process"/>
    <property type="evidence" value="ECO:0007669"/>
    <property type="project" value="Ensembl"/>
</dbReference>
<dbReference type="GO" id="GO:0035641">
    <property type="term" value="P:locomotory exploration behavior"/>
    <property type="evidence" value="ECO:0007669"/>
    <property type="project" value="Ensembl"/>
</dbReference>
<dbReference type="GO" id="GO:0015909">
    <property type="term" value="P:long-chain fatty acid transport"/>
    <property type="evidence" value="ECO:0007669"/>
    <property type="project" value="Ensembl"/>
</dbReference>
<dbReference type="GO" id="GO:0007616">
    <property type="term" value="P:long-term memory"/>
    <property type="evidence" value="ECO:0007669"/>
    <property type="project" value="Ensembl"/>
</dbReference>
<dbReference type="GO" id="GO:0034374">
    <property type="term" value="P:low-density lipoprotein particle remodeling"/>
    <property type="evidence" value="ECO:0007669"/>
    <property type="project" value="Ensembl"/>
</dbReference>
<dbReference type="GO" id="GO:0051651">
    <property type="term" value="P:maintenance of location in cell"/>
    <property type="evidence" value="ECO:0007669"/>
    <property type="project" value="Ensembl"/>
</dbReference>
<dbReference type="GO" id="GO:0032438">
    <property type="term" value="P:melanosome organization"/>
    <property type="evidence" value="ECO:0000250"/>
    <property type="project" value="UniProtKB"/>
</dbReference>
<dbReference type="GO" id="GO:1905907">
    <property type="term" value="P:negative regulation of amyloid fibril formation"/>
    <property type="evidence" value="ECO:0000250"/>
    <property type="project" value="UniProtKB"/>
</dbReference>
<dbReference type="GO" id="GO:1902430">
    <property type="term" value="P:negative regulation of amyloid-beta formation"/>
    <property type="evidence" value="ECO:0007669"/>
    <property type="project" value="Ensembl"/>
</dbReference>
<dbReference type="GO" id="GO:0043537">
    <property type="term" value="P:negative regulation of blood vessel endothelial cell migration"/>
    <property type="evidence" value="ECO:0007669"/>
    <property type="project" value="Ensembl"/>
</dbReference>
<dbReference type="GO" id="GO:0090090">
    <property type="term" value="P:negative regulation of canonical Wnt signaling pathway"/>
    <property type="evidence" value="ECO:0007669"/>
    <property type="project" value="Ensembl"/>
</dbReference>
<dbReference type="GO" id="GO:0045541">
    <property type="term" value="P:negative regulation of cholesterol biosynthetic process"/>
    <property type="evidence" value="ECO:0007669"/>
    <property type="project" value="Ensembl"/>
</dbReference>
<dbReference type="GO" id="GO:0001937">
    <property type="term" value="P:negative regulation of endothelial cell proliferation"/>
    <property type="evidence" value="ECO:0007669"/>
    <property type="project" value="Ensembl"/>
</dbReference>
<dbReference type="GO" id="GO:0010629">
    <property type="term" value="P:negative regulation of gene expression"/>
    <property type="evidence" value="ECO:0007669"/>
    <property type="project" value="Ensembl"/>
</dbReference>
<dbReference type="GO" id="GO:0050728">
    <property type="term" value="P:negative regulation of inflammatory response"/>
    <property type="evidence" value="ECO:0007669"/>
    <property type="project" value="Ensembl"/>
</dbReference>
<dbReference type="GO" id="GO:1900272">
    <property type="term" value="P:negative regulation of long-term synaptic potentiation"/>
    <property type="evidence" value="ECO:0007669"/>
    <property type="project" value="Ensembl"/>
</dbReference>
<dbReference type="GO" id="GO:0010977">
    <property type="term" value="P:negative regulation of neuron projection development"/>
    <property type="evidence" value="ECO:0007669"/>
    <property type="project" value="Ensembl"/>
</dbReference>
<dbReference type="GO" id="GO:0010544">
    <property type="term" value="P:negative regulation of platelet activation"/>
    <property type="evidence" value="ECO:0007669"/>
    <property type="project" value="Ensembl"/>
</dbReference>
<dbReference type="GO" id="GO:0050709">
    <property type="term" value="P:negative regulation of protein secretion"/>
    <property type="evidence" value="ECO:0007669"/>
    <property type="project" value="Ensembl"/>
</dbReference>
<dbReference type="GO" id="GO:0048662">
    <property type="term" value="P:negative regulation of smooth muscle cell proliferation"/>
    <property type="evidence" value="ECO:0007669"/>
    <property type="project" value="Ensembl"/>
</dbReference>
<dbReference type="GO" id="GO:0090209">
    <property type="term" value="P:negative regulation of triglyceride metabolic process"/>
    <property type="evidence" value="ECO:0007669"/>
    <property type="project" value="Ensembl"/>
</dbReference>
<dbReference type="GO" id="GO:0031175">
    <property type="term" value="P:neuron projection development"/>
    <property type="evidence" value="ECO:0000250"/>
    <property type="project" value="UniProtKB"/>
</dbReference>
<dbReference type="GO" id="GO:0038060">
    <property type="term" value="P:nitric oxide-cGMP-mediated signaling"/>
    <property type="evidence" value="ECO:0007669"/>
    <property type="project" value="Ensembl"/>
</dbReference>
<dbReference type="GO" id="GO:0097114">
    <property type="term" value="P:NMDA glutamate receptor clustering"/>
    <property type="evidence" value="ECO:0007669"/>
    <property type="project" value="Ensembl"/>
</dbReference>
<dbReference type="GO" id="GO:0033700">
    <property type="term" value="P:phospholipid efflux"/>
    <property type="evidence" value="ECO:0000318"/>
    <property type="project" value="GO_Central"/>
</dbReference>
<dbReference type="GO" id="GO:0044794">
    <property type="term" value="P:positive regulation by host of viral process"/>
    <property type="evidence" value="ECO:0007669"/>
    <property type="project" value="Ensembl"/>
</dbReference>
<dbReference type="GO" id="GO:1900223">
    <property type="term" value="P:positive regulation of amyloid-beta clearance"/>
    <property type="evidence" value="ECO:0000250"/>
    <property type="project" value="UniProtKB"/>
</dbReference>
<dbReference type="GO" id="GO:0010875">
    <property type="term" value="P:positive regulation of cholesterol efflux"/>
    <property type="evidence" value="ECO:0007669"/>
    <property type="project" value="Ensembl"/>
</dbReference>
<dbReference type="GO" id="GO:0090205">
    <property type="term" value="P:positive regulation of cholesterol metabolic process"/>
    <property type="evidence" value="ECO:0007669"/>
    <property type="project" value="Ensembl"/>
</dbReference>
<dbReference type="GO" id="GO:0060999">
    <property type="term" value="P:positive regulation of dendritic spine development"/>
    <property type="evidence" value="ECO:0007669"/>
    <property type="project" value="Ensembl"/>
</dbReference>
<dbReference type="GO" id="GO:1902952">
    <property type="term" value="P:positive regulation of dendritic spine maintenance"/>
    <property type="evidence" value="ECO:0007669"/>
    <property type="project" value="Ensembl"/>
</dbReference>
<dbReference type="GO" id="GO:0045893">
    <property type="term" value="P:positive regulation of DNA-templated transcription"/>
    <property type="evidence" value="ECO:0007669"/>
    <property type="project" value="Ensembl"/>
</dbReference>
<dbReference type="GO" id="GO:0045807">
    <property type="term" value="P:positive regulation of endocytosis"/>
    <property type="evidence" value="ECO:0007669"/>
    <property type="project" value="Ensembl"/>
</dbReference>
<dbReference type="GO" id="GO:0070374">
    <property type="term" value="P:positive regulation of ERK1 and ERK2 cascade"/>
    <property type="evidence" value="ECO:0007669"/>
    <property type="project" value="Ensembl"/>
</dbReference>
<dbReference type="GO" id="GO:0046889">
    <property type="term" value="P:positive regulation of lipid biosynthetic process"/>
    <property type="evidence" value="ECO:0007669"/>
    <property type="project" value="Ensembl"/>
</dbReference>
<dbReference type="GO" id="GO:1903002">
    <property type="term" value="P:positive regulation of lipid transport across blood-brain barrier"/>
    <property type="evidence" value="ECO:0007669"/>
    <property type="project" value="Ensembl"/>
</dbReference>
<dbReference type="GO" id="GO:0140077">
    <property type="term" value="P:positive regulation of lipoprotein transport"/>
    <property type="evidence" value="ECO:0007669"/>
    <property type="project" value="Ensembl"/>
</dbReference>
<dbReference type="GO" id="GO:0032805">
    <property type="term" value="P:positive regulation of low-density lipoprotein particle receptor catabolic process"/>
    <property type="evidence" value="ECO:0007669"/>
    <property type="project" value="Ensembl"/>
</dbReference>
<dbReference type="GO" id="GO:0051044">
    <property type="term" value="P:positive regulation of membrane protein ectodomain proteolysis"/>
    <property type="evidence" value="ECO:0007669"/>
    <property type="project" value="Ensembl"/>
</dbReference>
<dbReference type="GO" id="GO:0010976">
    <property type="term" value="P:positive regulation of neuron projection development"/>
    <property type="evidence" value="ECO:0007669"/>
    <property type="project" value="Ensembl"/>
</dbReference>
<dbReference type="GO" id="GO:0045429">
    <property type="term" value="P:positive regulation of nitric oxide biosynthetic process"/>
    <property type="evidence" value="ECO:0007669"/>
    <property type="project" value="Ensembl"/>
</dbReference>
<dbReference type="GO" id="GO:1902995">
    <property type="term" value="P:positive regulation of phospholipid efflux"/>
    <property type="evidence" value="ECO:0007669"/>
    <property type="project" value="Ensembl"/>
</dbReference>
<dbReference type="GO" id="GO:0017038">
    <property type="term" value="P:protein import"/>
    <property type="evidence" value="ECO:0007669"/>
    <property type="project" value="Ensembl"/>
</dbReference>
<dbReference type="GO" id="GO:0006898">
    <property type="term" value="P:receptor-mediated endocytosis"/>
    <property type="evidence" value="ECO:0007669"/>
    <property type="project" value="Ensembl"/>
</dbReference>
<dbReference type="GO" id="GO:0042981">
    <property type="term" value="P:regulation of apoptotic process"/>
    <property type="evidence" value="ECO:0007669"/>
    <property type="project" value="Ensembl"/>
</dbReference>
<dbReference type="GO" id="GO:2000822">
    <property type="term" value="P:regulation of behavioral fear response"/>
    <property type="evidence" value="ECO:0007669"/>
    <property type="project" value="Ensembl"/>
</dbReference>
<dbReference type="GO" id="GO:0032489">
    <property type="term" value="P:regulation of Cdc42 protein signal transduction"/>
    <property type="evidence" value="ECO:0007669"/>
    <property type="project" value="Ensembl"/>
</dbReference>
<dbReference type="GO" id="GO:1905890">
    <property type="term" value="P:regulation of cellular response to very-low-density lipoprotein particle stimulus"/>
    <property type="evidence" value="ECO:0007669"/>
    <property type="project" value="Ensembl"/>
</dbReference>
<dbReference type="GO" id="GO:0045088">
    <property type="term" value="P:regulation of innate immune response"/>
    <property type="evidence" value="ECO:0007669"/>
    <property type="project" value="Ensembl"/>
</dbReference>
<dbReference type="GO" id="GO:0061136">
    <property type="term" value="P:regulation of proteasomal protein catabolic process"/>
    <property type="evidence" value="ECO:0007669"/>
    <property type="project" value="Ensembl"/>
</dbReference>
<dbReference type="GO" id="GO:0043254">
    <property type="term" value="P:regulation of protein-containing complex assembly"/>
    <property type="evidence" value="ECO:0007669"/>
    <property type="project" value="Ensembl"/>
</dbReference>
<dbReference type="GO" id="GO:0061771">
    <property type="term" value="P:response to caloric restriction"/>
    <property type="evidence" value="ECO:0007669"/>
    <property type="project" value="Ensembl"/>
</dbReference>
<dbReference type="GO" id="GO:0002021">
    <property type="term" value="P:response to dietary excess"/>
    <property type="evidence" value="ECO:0007669"/>
    <property type="project" value="Ensembl"/>
</dbReference>
<dbReference type="GO" id="GO:0006979">
    <property type="term" value="P:response to oxidative stress"/>
    <property type="evidence" value="ECO:0007669"/>
    <property type="project" value="Ensembl"/>
</dbReference>
<dbReference type="GO" id="GO:0043691">
    <property type="term" value="P:reverse cholesterol transport"/>
    <property type="evidence" value="ECO:0007669"/>
    <property type="project" value="Ensembl"/>
</dbReference>
<dbReference type="GO" id="GO:0070328">
    <property type="term" value="P:triglyceride homeostasis"/>
    <property type="evidence" value="ECO:0007669"/>
    <property type="project" value="Ensembl"/>
</dbReference>
<dbReference type="GO" id="GO:0006641">
    <property type="term" value="P:triglyceride metabolic process"/>
    <property type="evidence" value="ECO:0007669"/>
    <property type="project" value="Ensembl"/>
</dbReference>
<dbReference type="GO" id="GO:0071830">
    <property type="term" value="P:triglyceride-rich lipoprotein particle clearance"/>
    <property type="evidence" value="ECO:0000250"/>
    <property type="project" value="UniProtKB"/>
</dbReference>
<dbReference type="GO" id="GO:0042311">
    <property type="term" value="P:vasodilation"/>
    <property type="evidence" value="ECO:0007669"/>
    <property type="project" value="Ensembl"/>
</dbReference>
<dbReference type="GO" id="GO:0034447">
    <property type="term" value="P:very-low-density lipoprotein particle clearance"/>
    <property type="evidence" value="ECO:0000250"/>
    <property type="project" value="UniProtKB"/>
</dbReference>
<dbReference type="GO" id="GO:0034372">
    <property type="term" value="P:very-low-density lipoprotein particle remodeling"/>
    <property type="evidence" value="ECO:0007669"/>
    <property type="project" value="Ensembl"/>
</dbReference>
<dbReference type="GO" id="GO:0019068">
    <property type="term" value="P:virion assembly"/>
    <property type="evidence" value="ECO:0007669"/>
    <property type="project" value="Ensembl"/>
</dbReference>
<dbReference type="FunFam" id="1.20.120.20:FF:000002">
    <property type="entry name" value="Apolipoprotein E"/>
    <property type="match status" value="1"/>
</dbReference>
<dbReference type="FunFam" id="1.20.120.20:FF:000003">
    <property type="entry name" value="Apolipoprotein E"/>
    <property type="match status" value="1"/>
</dbReference>
<dbReference type="Gene3D" id="1.20.120.20">
    <property type="entry name" value="Apolipoprotein"/>
    <property type="match status" value="2"/>
</dbReference>
<dbReference type="InterPro" id="IPR000074">
    <property type="entry name" value="ApoA_E"/>
</dbReference>
<dbReference type="InterPro" id="IPR050163">
    <property type="entry name" value="Apolipoprotein_A1/A4/E"/>
</dbReference>
<dbReference type="PANTHER" id="PTHR18976">
    <property type="entry name" value="APOLIPOPROTEIN"/>
    <property type="match status" value="1"/>
</dbReference>
<dbReference type="PANTHER" id="PTHR18976:SF2">
    <property type="entry name" value="APOLIPOPROTEIN E"/>
    <property type="match status" value="1"/>
</dbReference>
<dbReference type="Pfam" id="PF01442">
    <property type="entry name" value="Apolipoprotein"/>
    <property type="match status" value="1"/>
</dbReference>
<dbReference type="SUPFAM" id="SSF58113">
    <property type="entry name" value="Apolipoprotein A-I"/>
    <property type="match status" value="1"/>
</dbReference>
<reference key="1">
    <citation type="submission" date="1999-11" db="EMBL/GenBank/DDBJ databases">
        <title>APOE gene evolution in Hominoidea.</title>
        <authorList>
            <person name="Rogaev E.I."/>
            <person name="Dvorianchikov G.A."/>
            <person name="Riazanskaia N.N."/>
        </authorList>
    </citation>
    <scope>NUCLEOTIDE SEQUENCE [GENOMIC DNA]</scope>
</reference>
<reference key="2">
    <citation type="journal article" date="2000" name="Genome Res.">
        <title>Sequence diversity and large-scale typing of SNPs in the human apolipoprotein E gene.</title>
        <authorList>
            <person name="Nickerson D.A."/>
            <person name="Taylor S.L."/>
            <person name="Fullerton S.M."/>
            <person name="Weiss K.M."/>
            <person name="Clark A.G."/>
            <person name="Stengard J.H."/>
            <person name="Salomaa V."/>
            <person name="Boerwinkle E."/>
            <person name="Sing C.F."/>
        </authorList>
    </citation>
    <scope>NUCLEOTIDE SEQUENCE [GENOMIC DNA]</scope>
</reference>
<comment type="function">
    <text evidence="1">APOE is an apolipoprotein, a protein associating with lipid particles, that mainly functions in lipoprotein-mediated lipid transport between organs via the plasma and interstitial fluids. APOE is a core component of plasma lipoproteins and is involved in their production, conversion and clearance. Apolipoproteins are amphipathic molecules that interact both with lipids of the lipoprotein particle core and the aqueous environment of the plasma. As such, APOE associates with chylomicrons, chylomicron remnants, very low density lipoproteins (VLDL) and intermediate density lipoproteins (IDL) but shows a preferential binding to high-density lipoproteins (HDL). It also binds a wide range of cellular receptors including the LDL receptor/LDLR, the LDL receptor-related proteins LRP1, LRP2 and LRP8 and the very low-density lipoprotein receptor/VLDLR that mediate the cellular uptake of the APOE-containing lipoprotein particles. Finally, APOE also has a heparin-binding activity and binds heparan-sulfate proteoglycans on the surface of cells, a property that supports the capture and the receptor-mediated uptake of APOE-containing lipoproteins by cells. A main function of APOE is to mediate lipoprotein clearance through the uptake of chylomicrons, VLDLs, and HDLs by hepatocytes. APOE is also involved in the biosynthesis by the liver of VLDLs as well as their uptake by peripheral tissues ensuring the delivery of triglycerides and energy storage in muscle, heart and adipose tissues. By participating in the lipoprotein-mediated distribution of lipids among tissues, APOE plays a critical role in plasma and tissues lipid homeostasis. APOE is also involved in two steps of reverse cholesterol transport, the HDLs-mediated transport of cholesterol from peripheral tissues to the liver, and thereby plays an important role in cholesterol homeostasis. First, it is functionally associated with ABCA1 in the biogenesis of HDLs in tissues. Second, it is enriched in circulating HDLs and mediates their uptake by hepatocytes. APOE also plays an important role in lipid transport in the central nervous system, regulating neuron survival and sprouting.</text>
</comment>
<comment type="subunit">
    <text evidence="1">Homotetramer. May interact with ABCA1; functionally associated with ABCA1 in the biogenesis of HDLs. May interact with APP/A4 amyloid-beta peptide; the interaction is extremely stable in vitro but its physiological significance is unclear. May interact with MAPT. May interact with MAP2. In the cerebrospinal fluid, interacts with secreted SORL1. Interacts with PMEL; this allows the loading of PMEL luminal fragment on ILVs to induce fibril nucleation.</text>
</comment>
<comment type="subcellular location">
    <subcellularLocation>
        <location evidence="1">Secreted</location>
    </subcellularLocation>
    <subcellularLocation>
        <location evidence="1">Secreted</location>
        <location evidence="1">Extracellular space</location>
    </subcellularLocation>
    <subcellularLocation>
        <location evidence="1">Secreted</location>
        <location evidence="1">Extracellular space</location>
        <location evidence="1">Extracellular matrix</location>
    </subcellularLocation>
    <subcellularLocation>
        <location evidence="1">Extracellular vesicle</location>
    </subcellularLocation>
    <subcellularLocation>
        <location evidence="1">Endosome</location>
        <location evidence="1">Multivesicular body</location>
    </subcellularLocation>
    <text evidence="1">In the plasma, APOE is associated with chylomicrons, chylomicrons remnants, VLDL, LDL and HDL lipoproteins. Lipid poor oligomeric APOE is associated with the extracellular matrix in a calcium- and heparan-sulfate proteoglycans-dependent manner. Lipidation induces the release from the extracellular matrix. Colocalizes with CD63 and PMEL at exosomes and in intraluminal vesicles within multivesicular endosomes.</text>
</comment>
<comment type="PTM">
    <text evidence="1">APOE exists as multiple glycosylated and sialylated glycoforms within cells and in plasma. The extent of glycosylation and sialylation are tissue and context specific.</text>
</comment>
<comment type="PTM">
    <text evidence="1">Glycated in plasma VLDL.</text>
</comment>
<comment type="PTM">
    <text evidence="1">Phosphorylated by FAM20C in the extracellular medium.</text>
</comment>
<comment type="similarity">
    <text evidence="4">Belongs to the apolipoprotein A1/A4/E family.</text>
</comment>